<organism>
    <name type="scientific">Borrelia recurrentis (strain A1)</name>
    <dbReference type="NCBI Taxonomy" id="412418"/>
    <lineage>
        <taxon>Bacteria</taxon>
        <taxon>Pseudomonadati</taxon>
        <taxon>Spirochaetota</taxon>
        <taxon>Spirochaetia</taxon>
        <taxon>Spirochaetales</taxon>
        <taxon>Borreliaceae</taxon>
        <taxon>Borrelia</taxon>
    </lineage>
</organism>
<proteinExistence type="inferred from homology"/>
<accession>B5RR08</accession>
<feature type="chain" id="PRO_1000127315" description="Large ribosomal subunit protein bL35">
    <location>
        <begin position="1"/>
        <end position="65"/>
    </location>
</feature>
<keyword id="KW-0687">Ribonucleoprotein</keyword>
<keyword id="KW-0689">Ribosomal protein</keyword>
<dbReference type="EMBL" id="CP000993">
    <property type="protein sequence ID" value="ACH94442.1"/>
    <property type="molecule type" value="Genomic_DNA"/>
</dbReference>
<dbReference type="RefSeq" id="WP_012537956.1">
    <property type="nucleotide sequence ID" value="NZ_CP169983.1"/>
</dbReference>
<dbReference type="SMR" id="B5RR08"/>
<dbReference type="KEGG" id="bre:BRE_187"/>
<dbReference type="HOGENOM" id="CLU_169643_1_1_12"/>
<dbReference type="Proteomes" id="UP000000612">
    <property type="component" value="Chromosome"/>
</dbReference>
<dbReference type="GO" id="GO:0022625">
    <property type="term" value="C:cytosolic large ribosomal subunit"/>
    <property type="evidence" value="ECO:0007669"/>
    <property type="project" value="TreeGrafter"/>
</dbReference>
<dbReference type="GO" id="GO:0003735">
    <property type="term" value="F:structural constituent of ribosome"/>
    <property type="evidence" value="ECO:0007669"/>
    <property type="project" value="InterPro"/>
</dbReference>
<dbReference type="GO" id="GO:0006412">
    <property type="term" value="P:translation"/>
    <property type="evidence" value="ECO:0007669"/>
    <property type="project" value="UniProtKB-UniRule"/>
</dbReference>
<dbReference type="FunFam" id="4.10.410.60:FF:000001">
    <property type="entry name" value="50S ribosomal protein L35"/>
    <property type="match status" value="1"/>
</dbReference>
<dbReference type="Gene3D" id="4.10.410.60">
    <property type="match status" value="1"/>
</dbReference>
<dbReference type="HAMAP" id="MF_00514">
    <property type="entry name" value="Ribosomal_bL35"/>
    <property type="match status" value="1"/>
</dbReference>
<dbReference type="InterPro" id="IPR001706">
    <property type="entry name" value="Ribosomal_bL35"/>
</dbReference>
<dbReference type="InterPro" id="IPR021137">
    <property type="entry name" value="Ribosomal_bL35-like"/>
</dbReference>
<dbReference type="InterPro" id="IPR018265">
    <property type="entry name" value="Ribosomal_bL35_CS"/>
</dbReference>
<dbReference type="InterPro" id="IPR037229">
    <property type="entry name" value="Ribosomal_bL35_sf"/>
</dbReference>
<dbReference type="NCBIfam" id="TIGR00001">
    <property type="entry name" value="rpmI_bact"/>
    <property type="match status" value="1"/>
</dbReference>
<dbReference type="PANTHER" id="PTHR33343">
    <property type="entry name" value="54S RIBOSOMAL PROTEIN BL35M"/>
    <property type="match status" value="1"/>
</dbReference>
<dbReference type="PANTHER" id="PTHR33343:SF1">
    <property type="entry name" value="LARGE RIBOSOMAL SUBUNIT PROTEIN BL35M"/>
    <property type="match status" value="1"/>
</dbReference>
<dbReference type="Pfam" id="PF01632">
    <property type="entry name" value="Ribosomal_L35p"/>
    <property type="match status" value="1"/>
</dbReference>
<dbReference type="PRINTS" id="PR00064">
    <property type="entry name" value="RIBOSOMALL35"/>
</dbReference>
<dbReference type="SUPFAM" id="SSF143034">
    <property type="entry name" value="L35p-like"/>
    <property type="match status" value="1"/>
</dbReference>
<dbReference type="PROSITE" id="PS00936">
    <property type="entry name" value="RIBOSOMAL_L35"/>
    <property type="match status" value="1"/>
</dbReference>
<reference key="1">
    <citation type="journal article" date="2008" name="PLoS Genet.">
        <title>The genome of Borrelia recurrentis, the agent of deadly louse-borne relapsing fever, is a degraded subset of tick-borne Borrelia duttonii.</title>
        <authorList>
            <person name="Lescot M."/>
            <person name="Audic S."/>
            <person name="Robert C."/>
            <person name="Nguyen T.T."/>
            <person name="Blanc G."/>
            <person name="Cutler S.J."/>
            <person name="Wincker P."/>
            <person name="Couloux A."/>
            <person name="Claverie J.-M."/>
            <person name="Raoult D."/>
            <person name="Drancourt M."/>
        </authorList>
    </citation>
    <scope>NUCLEOTIDE SEQUENCE [LARGE SCALE GENOMIC DNA]</scope>
    <source>
        <strain>A1</strain>
    </source>
</reference>
<gene>
    <name evidence="1" type="primary">rpmI</name>
    <name type="ordered locus">BRE_187</name>
</gene>
<comment type="similarity">
    <text evidence="1">Belongs to the bacterial ribosomal protein bL35 family.</text>
</comment>
<name>RL35_BORRA</name>
<protein>
    <recommendedName>
        <fullName evidence="1">Large ribosomal subunit protein bL35</fullName>
    </recommendedName>
    <alternativeName>
        <fullName evidence="2">50S ribosomal protein L35</fullName>
    </alternativeName>
</protein>
<sequence length="65" mass="7564">MPKMKTCKSARKRYAFTSKGKVKYKKQNLRHILTKKSAKRKRNLGKSGLVSNVEVKRIKTLLPYV</sequence>
<evidence type="ECO:0000255" key="1">
    <source>
        <dbReference type="HAMAP-Rule" id="MF_00514"/>
    </source>
</evidence>
<evidence type="ECO:0000305" key="2"/>